<protein>
    <recommendedName>
        <fullName evidence="1">GTPase Obg</fullName>
        <ecNumber evidence="1">3.6.5.-</ecNumber>
    </recommendedName>
    <alternativeName>
        <fullName evidence="1">GTP-binding protein Obg</fullName>
    </alternativeName>
</protein>
<organism>
    <name type="scientific">Histophilus somni (strain 129Pt)</name>
    <name type="common">Haemophilus somnus</name>
    <dbReference type="NCBI Taxonomy" id="205914"/>
    <lineage>
        <taxon>Bacteria</taxon>
        <taxon>Pseudomonadati</taxon>
        <taxon>Pseudomonadota</taxon>
        <taxon>Gammaproteobacteria</taxon>
        <taxon>Pasteurellales</taxon>
        <taxon>Pasteurellaceae</taxon>
        <taxon>Histophilus</taxon>
    </lineage>
</organism>
<feature type="chain" id="PRO_0000385966" description="GTPase Obg">
    <location>
        <begin position="1"/>
        <end position="392"/>
    </location>
</feature>
<feature type="domain" description="Obg" evidence="2">
    <location>
        <begin position="1"/>
        <end position="159"/>
    </location>
</feature>
<feature type="domain" description="OBG-type G" evidence="1">
    <location>
        <begin position="160"/>
        <end position="333"/>
    </location>
</feature>
<feature type="region of interest" description="Disordered" evidence="3">
    <location>
        <begin position="362"/>
        <end position="392"/>
    </location>
</feature>
<feature type="compositionally biased region" description="Acidic residues" evidence="3">
    <location>
        <begin position="365"/>
        <end position="386"/>
    </location>
</feature>
<feature type="binding site" evidence="1">
    <location>
        <begin position="166"/>
        <end position="173"/>
    </location>
    <ligand>
        <name>GTP</name>
        <dbReference type="ChEBI" id="CHEBI:37565"/>
    </ligand>
</feature>
<feature type="binding site" evidence="1">
    <location>
        <position position="173"/>
    </location>
    <ligand>
        <name>Mg(2+)</name>
        <dbReference type="ChEBI" id="CHEBI:18420"/>
    </ligand>
</feature>
<feature type="binding site" evidence="1">
    <location>
        <begin position="191"/>
        <end position="195"/>
    </location>
    <ligand>
        <name>GTP</name>
        <dbReference type="ChEBI" id="CHEBI:37565"/>
    </ligand>
</feature>
<feature type="binding site" evidence="1">
    <location>
        <position position="193"/>
    </location>
    <ligand>
        <name>Mg(2+)</name>
        <dbReference type="ChEBI" id="CHEBI:18420"/>
    </ligand>
</feature>
<feature type="binding site" evidence="1">
    <location>
        <begin position="213"/>
        <end position="216"/>
    </location>
    <ligand>
        <name>GTP</name>
        <dbReference type="ChEBI" id="CHEBI:37565"/>
    </ligand>
</feature>
<feature type="binding site" evidence="1">
    <location>
        <begin position="283"/>
        <end position="286"/>
    </location>
    <ligand>
        <name>GTP</name>
        <dbReference type="ChEBI" id="CHEBI:37565"/>
    </ligand>
</feature>
<feature type="binding site" evidence="1">
    <location>
        <begin position="314"/>
        <end position="316"/>
    </location>
    <ligand>
        <name>GTP</name>
        <dbReference type="ChEBI" id="CHEBI:37565"/>
    </ligand>
</feature>
<accession>Q0I1P5</accession>
<gene>
    <name evidence="1" type="primary">obg</name>
    <name type="ordered locus">HS_0248</name>
</gene>
<name>OBG_HISS1</name>
<sequence>MKFIDEALIRIEAGDGGNGCVSFRREKFIPKGGPDGGDGGDGGDVYLIADENLNTLIDYRFEKRFAAERGENGRSSDCTGRRGKDITLRVPVGTRAIDNDTKEVLGDLTKHGTKMLVAKGGYHGLGNARFKSSVNRAPRQKTNGTPGEKRDLQLELMLLADVGMLGLPNAGKSTFIRAVSAAKPKVADYPFTTLVPSLGVTRVDTSRSFVIADIPGLIEGASEGAGLGVRFLKHLERCHVLIHLVDIAPIDESDPADNIAIIEGELFQYSEKLANKPRWLVFNKIDTLSDEEATARAKNIMQRLGGEDDYYLISAATGKNVDVLCRDIMDFIEENPRQEQEKIDAQEVKFKWDDYHQEQLSEQVFTEDDQEGDDWDDWSEDDEEGVEIIYKP</sequence>
<keyword id="KW-0963">Cytoplasm</keyword>
<keyword id="KW-0342">GTP-binding</keyword>
<keyword id="KW-0378">Hydrolase</keyword>
<keyword id="KW-0460">Magnesium</keyword>
<keyword id="KW-0479">Metal-binding</keyword>
<keyword id="KW-0547">Nucleotide-binding</keyword>
<comment type="function">
    <text evidence="1">An essential GTPase which binds GTP, GDP and possibly (p)ppGpp with moderate affinity, with high nucleotide exchange rates and a fairly low GTP hydrolysis rate. Plays a role in control of the cell cycle, stress response, ribosome biogenesis and in those bacteria that undergo differentiation, in morphogenesis control.</text>
</comment>
<comment type="cofactor">
    <cofactor evidence="1">
        <name>Mg(2+)</name>
        <dbReference type="ChEBI" id="CHEBI:18420"/>
    </cofactor>
</comment>
<comment type="subunit">
    <text evidence="1">Monomer.</text>
</comment>
<comment type="subcellular location">
    <subcellularLocation>
        <location evidence="1">Cytoplasm</location>
    </subcellularLocation>
</comment>
<comment type="similarity">
    <text evidence="1">Belongs to the TRAFAC class OBG-HflX-like GTPase superfamily. OBG GTPase family.</text>
</comment>
<reference key="1">
    <citation type="journal article" date="2007" name="J. Bacteriol.">
        <title>Complete genome sequence of Haemophilus somnus (Histophilus somni) strain 129Pt and comparison to Haemophilus ducreyi 35000HP and Haemophilus influenzae Rd.</title>
        <authorList>
            <person name="Challacombe J.F."/>
            <person name="Duncan A.J."/>
            <person name="Brettin T.S."/>
            <person name="Bruce D."/>
            <person name="Chertkov O."/>
            <person name="Detter J.C."/>
            <person name="Han C.S."/>
            <person name="Misra M."/>
            <person name="Richardson P."/>
            <person name="Tapia R."/>
            <person name="Thayer N."/>
            <person name="Xie G."/>
            <person name="Inzana T.J."/>
        </authorList>
    </citation>
    <scope>NUCLEOTIDE SEQUENCE [LARGE SCALE GENOMIC DNA]</scope>
    <source>
        <strain>129Pt</strain>
    </source>
</reference>
<evidence type="ECO:0000255" key="1">
    <source>
        <dbReference type="HAMAP-Rule" id="MF_01454"/>
    </source>
</evidence>
<evidence type="ECO:0000255" key="2">
    <source>
        <dbReference type="PROSITE-ProRule" id="PRU01231"/>
    </source>
</evidence>
<evidence type="ECO:0000256" key="3">
    <source>
        <dbReference type="SAM" id="MobiDB-lite"/>
    </source>
</evidence>
<dbReference type="EC" id="3.6.5.-" evidence="1"/>
<dbReference type="EMBL" id="CP000436">
    <property type="protein sequence ID" value="ABI24526.1"/>
    <property type="molecule type" value="Genomic_DNA"/>
</dbReference>
<dbReference type="SMR" id="Q0I1P5"/>
<dbReference type="KEGG" id="hso:HS_0248"/>
<dbReference type="eggNOG" id="COG0536">
    <property type="taxonomic scope" value="Bacteria"/>
</dbReference>
<dbReference type="HOGENOM" id="CLU_011747_2_0_6"/>
<dbReference type="GO" id="GO:0005737">
    <property type="term" value="C:cytoplasm"/>
    <property type="evidence" value="ECO:0007669"/>
    <property type="project" value="UniProtKB-SubCell"/>
</dbReference>
<dbReference type="GO" id="GO:0005525">
    <property type="term" value="F:GTP binding"/>
    <property type="evidence" value="ECO:0007669"/>
    <property type="project" value="UniProtKB-UniRule"/>
</dbReference>
<dbReference type="GO" id="GO:0003924">
    <property type="term" value="F:GTPase activity"/>
    <property type="evidence" value="ECO:0007669"/>
    <property type="project" value="UniProtKB-UniRule"/>
</dbReference>
<dbReference type="GO" id="GO:0000287">
    <property type="term" value="F:magnesium ion binding"/>
    <property type="evidence" value="ECO:0007669"/>
    <property type="project" value="InterPro"/>
</dbReference>
<dbReference type="GO" id="GO:0042254">
    <property type="term" value="P:ribosome biogenesis"/>
    <property type="evidence" value="ECO:0007669"/>
    <property type="project" value="UniProtKB-UniRule"/>
</dbReference>
<dbReference type="CDD" id="cd01898">
    <property type="entry name" value="Obg"/>
    <property type="match status" value="1"/>
</dbReference>
<dbReference type="FunFam" id="2.70.210.12:FF:000001">
    <property type="entry name" value="GTPase Obg"/>
    <property type="match status" value="1"/>
</dbReference>
<dbReference type="Gene3D" id="2.70.210.12">
    <property type="entry name" value="GTP1/OBG domain"/>
    <property type="match status" value="1"/>
</dbReference>
<dbReference type="Gene3D" id="3.40.50.300">
    <property type="entry name" value="P-loop containing nucleotide triphosphate hydrolases"/>
    <property type="match status" value="1"/>
</dbReference>
<dbReference type="HAMAP" id="MF_01454">
    <property type="entry name" value="GTPase_Obg"/>
    <property type="match status" value="1"/>
</dbReference>
<dbReference type="InterPro" id="IPR031167">
    <property type="entry name" value="G_OBG"/>
</dbReference>
<dbReference type="InterPro" id="IPR006073">
    <property type="entry name" value="GTP-bd"/>
</dbReference>
<dbReference type="InterPro" id="IPR014100">
    <property type="entry name" value="GTP-bd_Obg/CgtA"/>
</dbReference>
<dbReference type="InterPro" id="IPR006074">
    <property type="entry name" value="GTP1-OBG_CS"/>
</dbReference>
<dbReference type="InterPro" id="IPR006169">
    <property type="entry name" value="GTP1_OBG_dom"/>
</dbReference>
<dbReference type="InterPro" id="IPR036726">
    <property type="entry name" value="GTP1_OBG_dom_sf"/>
</dbReference>
<dbReference type="InterPro" id="IPR045086">
    <property type="entry name" value="OBG_GTPase"/>
</dbReference>
<dbReference type="InterPro" id="IPR027417">
    <property type="entry name" value="P-loop_NTPase"/>
</dbReference>
<dbReference type="NCBIfam" id="TIGR02729">
    <property type="entry name" value="Obg_CgtA"/>
    <property type="match status" value="1"/>
</dbReference>
<dbReference type="NCBIfam" id="NF008955">
    <property type="entry name" value="PRK12297.1"/>
    <property type="match status" value="1"/>
</dbReference>
<dbReference type="NCBIfam" id="NF008956">
    <property type="entry name" value="PRK12299.1"/>
    <property type="match status" value="1"/>
</dbReference>
<dbReference type="PANTHER" id="PTHR11702">
    <property type="entry name" value="DEVELOPMENTALLY REGULATED GTP-BINDING PROTEIN-RELATED"/>
    <property type="match status" value="1"/>
</dbReference>
<dbReference type="PANTHER" id="PTHR11702:SF31">
    <property type="entry name" value="MITOCHONDRIAL RIBOSOME-ASSOCIATED GTPASE 2"/>
    <property type="match status" value="1"/>
</dbReference>
<dbReference type="Pfam" id="PF01018">
    <property type="entry name" value="GTP1_OBG"/>
    <property type="match status" value="1"/>
</dbReference>
<dbReference type="Pfam" id="PF01926">
    <property type="entry name" value="MMR_HSR1"/>
    <property type="match status" value="1"/>
</dbReference>
<dbReference type="PIRSF" id="PIRSF002401">
    <property type="entry name" value="GTP_bd_Obg/CgtA"/>
    <property type="match status" value="1"/>
</dbReference>
<dbReference type="PRINTS" id="PR00326">
    <property type="entry name" value="GTP1OBG"/>
</dbReference>
<dbReference type="SUPFAM" id="SSF82051">
    <property type="entry name" value="Obg GTP-binding protein N-terminal domain"/>
    <property type="match status" value="1"/>
</dbReference>
<dbReference type="SUPFAM" id="SSF52540">
    <property type="entry name" value="P-loop containing nucleoside triphosphate hydrolases"/>
    <property type="match status" value="1"/>
</dbReference>
<dbReference type="PROSITE" id="PS51710">
    <property type="entry name" value="G_OBG"/>
    <property type="match status" value="1"/>
</dbReference>
<dbReference type="PROSITE" id="PS00905">
    <property type="entry name" value="GTP1_OBG"/>
    <property type="match status" value="1"/>
</dbReference>
<dbReference type="PROSITE" id="PS51883">
    <property type="entry name" value="OBG"/>
    <property type="match status" value="1"/>
</dbReference>
<proteinExistence type="inferred from homology"/>